<dbReference type="EC" id="3.-.-.-"/>
<dbReference type="EMBL" id="AB009377">
    <property type="protein sequence ID" value="BAA24977.1"/>
    <property type="molecule type" value="mRNA"/>
</dbReference>
<dbReference type="CCDS" id="CCDS19004.1"/>
<dbReference type="RefSeq" id="NP_031885.3">
    <property type="nucleotide sequence ID" value="NM_007859.4"/>
</dbReference>
<dbReference type="PDB" id="1C9F">
    <property type="method" value="NMR"/>
    <property type="chains" value="A=1-87"/>
</dbReference>
<dbReference type="PDB" id="1F2R">
    <property type="method" value="NMR"/>
    <property type="chains" value="C=1-87"/>
</dbReference>
<dbReference type="PDB" id="1V0D">
    <property type="method" value="X-ray"/>
    <property type="resolution" value="2.60 A"/>
    <property type="chains" value="A=1-329"/>
</dbReference>
<dbReference type="PDBsum" id="1C9F"/>
<dbReference type="PDBsum" id="1F2R"/>
<dbReference type="PDBsum" id="1V0D"/>
<dbReference type="BMRB" id="O54788"/>
<dbReference type="SMR" id="O54788"/>
<dbReference type="BioGRID" id="199222">
    <property type="interactions" value="3"/>
</dbReference>
<dbReference type="FunCoup" id="O54788">
    <property type="interactions" value="1994"/>
</dbReference>
<dbReference type="IntAct" id="O54788">
    <property type="interactions" value="4"/>
</dbReference>
<dbReference type="MINT" id="O54788"/>
<dbReference type="STRING" id="10090.ENSMUSP00000030893"/>
<dbReference type="GlyGen" id="O54788">
    <property type="glycosylation" value="1 site"/>
</dbReference>
<dbReference type="PhosphoSitePlus" id="O54788"/>
<dbReference type="PaxDb" id="10090-ENSMUSP00000030893"/>
<dbReference type="ProteomicsDB" id="279642"/>
<dbReference type="Antibodypedia" id="3813">
    <property type="antibodies" value="537 antibodies from 38 providers"/>
</dbReference>
<dbReference type="DNASU" id="13368"/>
<dbReference type="Ensembl" id="ENSMUST00000030893.3">
    <property type="protein sequence ID" value="ENSMUSP00000030893.3"/>
    <property type="gene ID" value="ENSMUSG00000029027.10"/>
</dbReference>
<dbReference type="GeneID" id="13368"/>
<dbReference type="KEGG" id="mmu:13368"/>
<dbReference type="UCSC" id="uc008wav.2">
    <property type="organism name" value="mouse"/>
</dbReference>
<dbReference type="AGR" id="MGI:1196287"/>
<dbReference type="CTD" id="1677"/>
<dbReference type="MGI" id="MGI:1196287">
    <property type="gene designation" value="Dffb"/>
</dbReference>
<dbReference type="VEuPathDB" id="HostDB:ENSMUSG00000029027"/>
<dbReference type="eggNOG" id="ENOG502R0RF">
    <property type="taxonomic scope" value="Eukaryota"/>
</dbReference>
<dbReference type="GeneTree" id="ENSGT00390000014490"/>
<dbReference type="HOGENOM" id="CLU_049235_1_1_1"/>
<dbReference type="InParanoid" id="O54788"/>
<dbReference type="OMA" id="AQYHGSY"/>
<dbReference type="OrthoDB" id="9943677at2759"/>
<dbReference type="PhylomeDB" id="O54788"/>
<dbReference type="TreeFam" id="TF102022"/>
<dbReference type="Reactome" id="R-MMU-140342">
    <property type="pathway name" value="Apoptosis induced DNA fragmentation"/>
</dbReference>
<dbReference type="BioGRID-ORCS" id="13368">
    <property type="hits" value="3 hits in 78 CRISPR screens"/>
</dbReference>
<dbReference type="ChiTaRS" id="Dffb">
    <property type="organism name" value="mouse"/>
</dbReference>
<dbReference type="EvolutionaryTrace" id="O54788"/>
<dbReference type="PRO" id="PR:O54788"/>
<dbReference type="Proteomes" id="UP000000589">
    <property type="component" value="Chromosome 4"/>
</dbReference>
<dbReference type="RNAct" id="O54788">
    <property type="molecule type" value="protein"/>
</dbReference>
<dbReference type="Bgee" id="ENSMUSG00000029027">
    <property type="expression patterns" value="Expressed in granulocyte and 236 other cell types or tissues"/>
</dbReference>
<dbReference type="ExpressionAtlas" id="O54788">
    <property type="expression patterns" value="baseline and differential"/>
</dbReference>
<dbReference type="GO" id="GO:0000785">
    <property type="term" value="C:chromatin"/>
    <property type="evidence" value="ECO:0007669"/>
    <property type="project" value="Ensembl"/>
</dbReference>
<dbReference type="GO" id="GO:0005829">
    <property type="term" value="C:cytosol"/>
    <property type="evidence" value="ECO:0007669"/>
    <property type="project" value="Ensembl"/>
</dbReference>
<dbReference type="GO" id="GO:0005730">
    <property type="term" value="C:nucleolus"/>
    <property type="evidence" value="ECO:0007669"/>
    <property type="project" value="Ensembl"/>
</dbReference>
<dbReference type="GO" id="GO:0005654">
    <property type="term" value="C:nucleoplasm"/>
    <property type="evidence" value="ECO:0007669"/>
    <property type="project" value="Ensembl"/>
</dbReference>
<dbReference type="GO" id="GO:0005634">
    <property type="term" value="C:nucleus"/>
    <property type="evidence" value="ECO:0000266"/>
    <property type="project" value="MGI"/>
</dbReference>
<dbReference type="GO" id="GO:0032991">
    <property type="term" value="C:protein-containing complex"/>
    <property type="evidence" value="ECO:0007669"/>
    <property type="project" value="Ensembl"/>
</dbReference>
<dbReference type="GO" id="GO:0097718">
    <property type="term" value="F:disordered domain specific binding"/>
    <property type="evidence" value="ECO:0007669"/>
    <property type="project" value="Ensembl"/>
</dbReference>
<dbReference type="GO" id="GO:0003677">
    <property type="term" value="F:DNA binding"/>
    <property type="evidence" value="ECO:0000314"/>
    <property type="project" value="MGI"/>
</dbReference>
<dbReference type="GO" id="GO:0004520">
    <property type="term" value="F:DNA endonuclease activity"/>
    <property type="evidence" value="ECO:0007669"/>
    <property type="project" value="InterPro"/>
</dbReference>
<dbReference type="GO" id="GO:0019899">
    <property type="term" value="F:enzyme binding"/>
    <property type="evidence" value="ECO:0007669"/>
    <property type="project" value="Ensembl"/>
</dbReference>
<dbReference type="GO" id="GO:0042802">
    <property type="term" value="F:identical protein binding"/>
    <property type="evidence" value="ECO:0007669"/>
    <property type="project" value="Ensembl"/>
</dbReference>
<dbReference type="GO" id="GO:0004518">
    <property type="term" value="F:nuclease activity"/>
    <property type="evidence" value="ECO:0000314"/>
    <property type="project" value="MGI"/>
</dbReference>
<dbReference type="GO" id="GO:0030263">
    <property type="term" value="P:apoptotic chromosome condensation"/>
    <property type="evidence" value="ECO:0007669"/>
    <property type="project" value="Ensembl"/>
</dbReference>
<dbReference type="GO" id="GO:0006309">
    <property type="term" value="P:apoptotic DNA fragmentation"/>
    <property type="evidence" value="ECO:0000266"/>
    <property type="project" value="MGI"/>
</dbReference>
<dbReference type="GO" id="GO:1902511">
    <property type="term" value="P:negative regulation of apoptotic DNA fragmentation"/>
    <property type="evidence" value="ECO:0007669"/>
    <property type="project" value="Ensembl"/>
</dbReference>
<dbReference type="CDD" id="cd06535">
    <property type="entry name" value="CIDE_N_CAD"/>
    <property type="match status" value="1"/>
</dbReference>
<dbReference type="FunFam" id="3.10.20.10:FF:000006">
    <property type="entry name" value="DNA fragmentation factor subunit beta"/>
    <property type="match status" value="1"/>
</dbReference>
<dbReference type="Gene3D" id="3.10.20.10">
    <property type="match status" value="1"/>
</dbReference>
<dbReference type="Gene3D" id="6.10.140.170">
    <property type="match status" value="1"/>
</dbReference>
<dbReference type="InterPro" id="IPR003508">
    <property type="entry name" value="CIDE-N_dom"/>
</dbReference>
<dbReference type="InterPro" id="IPR039729">
    <property type="entry name" value="DFF40"/>
</dbReference>
<dbReference type="InterPro" id="IPR015311">
    <property type="entry name" value="DFF40_C"/>
</dbReference>
<dbReference type="InterPro" id="IPR044925">
    <property type="entry name" value="His-Me_finger_sf"/>
</dbReference>
<dbReference type="PANTHER" id="PTHR13067">
    <property type="entry name" value="CASPASE-ACTIVATED DNASE"/>
    <property type="match status" value="1"/>
</dbReference>
<dbReference type="PANTHER" id="PTHR13067:SF2">
    <property type="entry name" value="CASPASE-ACTIVATED DNASE"/>
    <property type="match status" value="1"/>
</dbReference>
<dbReference type="Pfam" id="PF02017">
    <property type="entry name" value="CIDE-N"/>
    <property type="match status" value="1"/>
</dbReference>
<dbReference type="Pfam" id="PF09230">
    <property type="entry name" value="DFF40"/>
    <property type="match status" value="1"/>
</dbReference>
<dbReference type="SMART" id="SM00266">
    <property type="entry name" value="CAD"/>
    <property type="match status" value="1"/>
</dbReference>
<dbReference type="SUPFAM" id="SSF54277">
    <property type="entry name" value="CAD &amp; PB1 domains"/>
    <property type="match status" value="1"/>
</dbReference>
<dbReference type="SUPFAM" id="SSF54060">
    <property type="entry name" value="His-Me finger endonucleases"/>
    <property type="match status" value="1"/>
</dbReference>
<dbReference type="PROSITE" id="PS51135">
    <property type="entry name" value="CIDE_N"/>
    <property type="match status" value="1"/>
</dbReference>
<name>DFFB_MOUSE</name>
<evidence type="ECO:0000250" key="1">
    <source>
        <dbReference type="UniProtKB" id="O76075"/>
    </source>
</evidence>
<evidence type="ECO:0000255" key="2">
    <source>
        <dbReference type="PROSITE-ProRule" id="PRU00447"/>
    </source>
</evidence>
<evidence type="ECO:0007829" key="3">
    <source>
        <dbReference type="PDB" id="1C9F"/>
    </source>
</evidence>
<evidence type="ECO:0007829" key="4">
    <source>
        <dbReference type="PDB" id="1F2R"/>
    </source>
</evidence>
<evidence type="ECO:0007829" key="5">
    <source>
        <dbReference type="PDB" id="1V0D"/>
    </source>
</evidence>
<reference key="1">
    <citation type="journal article" date="1998" name="Nature">
        <title>A caspase-activated DNase that degrades DNA during apoptosis, and its inhibitor ICAD.</title>
        <authorList>
            <person name="Enari M."/>
            <person name="Sakahira H."/>
            <person name="Yokoyama H."/>
            <person name="Okawa K."/>
            <person name="Iwamatsu A."/>
            <person name="Nagata S."/>
        </authorList>
    </citation>
    <scope>NUCLEOTIDE SEQUENCE [MRNA]</scope>
</reference>
<reference key="2">
    <citation type="journal article" date="1998" name="Nature">
        <title>Cleavage of CAD inhibitor in CAD activation and DNA degradation during apoptosis.</title>
        <authorList>
            <person name="Sakahira H."/>
            <person name="Enari M."/>
            <person name="Nagata S."/>
        </authorList>
    </citation>
    <scope>CHARACTERIZATION</scope>
</reference>
<reference key="3">
    <citation type="journal article" date="2010" name="Cell">
        <title>A tissue-specific atlas of mouse protein phosphorylation and expression.</title>
        <authorList>
            <person name="Huttlin E.L."/>
            <person name="Jedrychowski M.P."/>
            <person name="Elias J.E."/>
            <person name="Goswami T."/>
            <person name="Rad R."/>
            <person name="Beausoleil S.A."/>
            <person name="Villen J."/>
            <person name="Haas W."/>
            <person name="Sowa M.E."/>
            <person name="Gygi S.P."/>
        </authorList>
    </citation>
    <scope>IDENTIFICATION BY MASS SPECTROMETRY [LARGE SCALE ANALYSIS]</scope>
    <source>
        <tissue>Spleen</tissue>
    </source>
</reference>
<feature type="chain" id="PRO_0000144714" description="DNA fragmentation factor subunit beta">
    <location>
        <begin position="1"/>
        <end position="344"/>
    </location>
</feature>
<feature type="domain" description="CIDE-N" evidence="2">
    <location>
        <begin position="7"/>
        <end position="83"/>
    </location>
</feature>
<feature type="strand" evidence="3">
    <location>
        <begin position="9"/>
        <end position="15"/>
    </location>
</feature>
<feature type="strand" evidence="4">
    <location>
        <begin position="16"/>
        <end position="19"/>
    </location>
</feature>
<feature type="strand" evidence="3">
    <location>
        <begin position="23"/>
        <end position="28"/>
    </location>
</feature>
<feature type="helix" evidence="3">
    <location>
        <begin position="29"/>
        <end position="39"/>
    </location>
</feature>
<feature type="strand" evidence="3">
    <location>
        <begin position="48"/>
        <end position="51"/>
    </location>
</feature>
<feature type="turn" evidence="3">
    <location>
        <begin position="52"/>
        <end position="55"/>
    </location>
</feature>
<feature type="turn" evidence="4">
    <location>
        <begin position="60"/>
        <end position="62"/>
    </location>
</feature>
<feature type="strand" evidence="3">
    <location>
        <begin position="70"/>
        <end position="75"/>
    </location>
</feature>
<feature type="helix" evidence="5">
    <location>
        <begin position="88"/>
        <end position="94"/>
    </location>
</feature>
<feature type="helix" evidence="5">
    <location>
        <begin position="103"/>
        <end position="111"/>
    </location>
</feature>
<feature type="helix" evidence="5">
    <location>
        <begin position="116"/>
        <end position="129"/>
    </location>
</feature>
<feature type="turn" evidence="5">
    <location>
        <begin position="138"/>
        <end position="140"/>
    </location>
</feature>
<feature type="turn" evidence="5">
    <location>
        <begin position="142"/>
        <end position="147"/>
    </location>
</feature>
<feature type="helix" evidence="5">
    <location>
        <begin position="155"/>
        <end position="175"/>
    </location>
</feature>
<feature type="helix" evidence="5">
    <location>
        <begin position="176"/>
        <end position="180"/>
    </location>
</feature>
<feature type="turn" evidence="5">
    <location>
        <begin position="183"/>
        <end position="185"/>
    </location>
</feature>
<feature type="helix" evidence="5">
    <location>
        <begin position="186"/>
        <end position="202"/>
    </location>
</feature>
<feature type="helix" evidence="5">
    <location>
        <begin position="203"/>
        <end position="210"/>
    </location>
</feature>
<feature type="strand" evidence="5">
    <location>
        <begin position="212"/>
        <end position="214"/>
    </location>
</feature>
<feature type="turn" evidence="5">
    <location>
        <begin position="216"/>
        <end position="218"/>
    </location>
</feature>
<feature type="strand" evidence="5">
    <location>
        <begin position="235"/>
        <end position="237"/>
    </location>
</feature>
<feature type="helix" evidence="5">
    <location>
        <begin position="246"/>
        <end position="248"/>
    </location>
</feature>
<feature type="helix" evidence="5">
    <location>
        <begin position="250"/>
        <end position="255"/>
    </location>
</feature>
<feature type="turn" evidence="5">
    <location>
        <begin position="256"/>
        <end position="258"/>
    </location>
</feature>
<feature type="strand" evidence="5">
    <location>
        <begin position="259"/>
        <end position="265"/>
    </location>
</feature>
<feature type="turn" evidence="5">
    <location>
        <begin position="267"/>
        <end position="270"/>
    </location>
</feature>
<feature type="helix" evidence="5">
    <location>
        <begin position="271"/>
        <end position="281"/>
    </location>
</feature>
<feature type="helix" evidence="5">
    <location>
        <begin position="287"/>
        <end position="295"/>
    </location>
</feature>
<feature type="turn" evidence="5">
    <location>
        <begin position="297"/>
        <end position="299"/>
    </location>
</feature>
<feature type="strand" evidence="5">
    <location>
        <begin position="300"/>
        <end position="303"/>
    </location>
</feature>
<feature type="helix" evidence="5">
    <location>
        <begin position="305"/>
        <end position="307"/>
    </location>
</feature>
<feature type="turn" evidence="5">
    <location>
        <begin position="319"/>
        <end position="321"/>
    </location>
</feature>
<accession>O54788</accession>
<keyword id="KW-0002">3D-structure</keyword>
<keyword id="KW-0053">Apoptosis</keyword>
<keyword id="KW-0963">Cytoplasm</keyword>
<keyword id="KW-0378">Hydrolase</keyword>
<keyword id="KW-0540">Nuclease</keyword>
<keyword id="KW-0539">Nucleus</keyword>
<keyword id="KW-1185">Reference proteome</keyword>
<gene>
    <name type="primary">Dffb</name>
    <name type="synonym">Cad</name>
</gene>
<organism>
    <name type="scientific">Mus musculus</name>
    <name type="common">Mouse</name>
    <dbReference type="NCBI Taxonomy" id="10090"/>
    <lineage>
        <taxon>Eukaryota</taxon>
        <taxon>Metazoa</taxon>
        <taxon>Chordata</taxon>
        <taxon>Craniata</taxon>
        <taxon>Vertebrata</taxon>
        <taxon>Euteleostomi</taxon>
        <taxon>Mammalia</taxon>
        <taxon>Eutheria</taxon>
        <taxon>Euarchontoglires</taxon>
        <taxon>Glires</taxon>
        <taxon>Rodentia</taxon>
        <taxon>Myomorpha</taxon>
        <taxon>Muroidea</taxon>
        <taxon>Muridae</taxon>
        <taxon>Murinae</taxon>
        <taxon>Mus</taxon>
        <taxon>Mus</taxon>
    </lineage>
</organism>
<proteinExistence type="evidence at protein level"/>
<sequence length="344" mass="39449">MCAVLRQPKCVKLRALHSACKFGVAARSCQELLRKGCVRFQLPMPGSRLCLYEDGTEVTDDCFPGLPNDAELLLLTAGETWHGYVSDITRFLSVFNEPHAGVIQAARQLLSDEQAPLRQKLLADLLHHVSQNITAETREQDPSWFEGLESRFRNKSGYLRYSCESRIRGYLREVSAYTSMVDEAAQEEYLRVLGSMCQKLKSVQYNGSYFDRGAEASSRLCTPEGWFSCQGPFDLESCLSKHSINPYGNRESRILFSTWNLDHIIEKKRTVVPTLAEAIQDGREVNWEYFYSLLFTAENLKLVHIACHKKTTHKLECDRSRIYRPQTGSRRKQPARKKRPARKR</sequence>
<comment type="function">
    <text>Nuclease that induces DNA fragmentation and chromatin condensation during apoptosis. Degrades naked DNA and induces apoptotic morphology.</text>
</comment>
<comment type="activity regulation">
    <text>Inhibited by DFFA (DFF45).</text>
</comment>
<comment type="subunit">
    <text evidence="1">Heterodimer of DFFA and DFFB (By similarity). Interacts with H1-1 (By similarity).</text>
</comment>
<comment type="interaction">
    <interactant intactId="EBI-7365197">
        <id>O54788</id>
    </interactant>
    <interactant intactId="EBI-1634519">
        <id>O54786</id>
        <label>Dffa</label>
    </interactant>
    <organismsDiffer>false</organismsDiffer>
    <experiments>7</experiments>
</comment>
<comment type="interaction">
    <interactant intactId="EBI-7365197">
        <id>O54788</id>
    </interactant>
    <interactant intactId="EBI-309205">
        <id>Q9D1C8</id>
        <label>Vps28</label>
    </interactant>
    <organismsDiffer>false</organismsDiffer>
    <experiments>6</experiments>
</comment>
<comment type="interaction">
    <interactant intactId="EBI-7365197">
        <id>O54788</id>
    </interactant>
    <interactant intactId="EBI-727171">
        <id>O00273</id>
        <label>DFFA</label>
    </interactant>
    <organismsDiffer>true</organismsDiffer>
    <experiments>8</experiments>
</comment>
<comment type="subcellular location">
    <subcellularLocation>
        <location>Cytoplasm</location>
    </subcellularLocation>
    <subcellularLocation>
        <location>Nucleus</location>
    </subcellularLocation>
</comment>
<protein>
    <recommendedName>
        <fullName>DNA fragmentation factor subunit beta</fullName>
        <ecNumber>3.-.-.-</ecNumber>
    </recommendedName>
    <alternativeName>
        <fullName>Caspase-activated deoxyribonuclease</fullName>
        <shortName>CAD</shortName>
        <shortName>Caspase-activated DNase</shortName>
    </alternativeName>
    <alternativeName>
        <fullName>DNA fragmentation factor 40 kDa subunit</fullName>
        <shortName>DFF-40</shortName>
    </alternativeName>
</protein>